<accession>B2UEE6</accession>
<dbReference type="EC" id="5.3.1.16" evidence="1"/>
<dbReference type="EMBL" id="CP001068">
    <property type="protein sequence ID" value="ACD28346.1"/>
    <property type="molecule type" value="Genomic_DNA"/>
</dbReference>
<dbReference type="SMR" id="B2UEE6"/>
<dbReference type="STRING" id="402626.Rpic_3224"/>
<dbReference type="KEGG" id="rpi:Rpic_3224"/>
<dbReference type="eggNOG" id="COG0106">
    <property type="taxonomic scope" value="Bacteria"/>
</dbReference>
<dbReference type="HOGENOM" id="CLU_048577_1_1_4"/>
<dbReference type="UniPathway" id="UPA00031">
    <property type="reaction ID" value="UER00009"/>
</dbReference>
<dbReference type="GO" id="GO:0005737">
    <property type="term" value="C:cytoplasm"/>
    <property type="evidence" value="ECO:0007669"/>
    <property type="project" value="UniProtKB-SubCell"/>
</dbReference>
<dbReference type="GO" id="GO:0003949">
    <property type="term" value="F:1-(5-phosphoribosyl)-5-[(5-phosphoribosylamino)methylideneamino]imidazole-4-carboxamide isomerase activity"/>
    <property type="evidence" value="ECO:0007669"/>
    <property type="project" value="UniProtKB-UniRule"/>
</dbReference>
<dbReference type="GO" id="GO:0000105">
    <property type="term" value="P:L-histidine biosynthetic process"/>
    <property type="evidence" value="ECO:0007669"/>
    <property type="project" value="UniProtKB-UniRule"/>
</dbReference>
<dbReference type="GO" id="GO:0000162">
    <property type="term" value="P:L-tryptophan biosynthetic process"/>
    <property type="evidence" value="ECO:0007669"/>
    <property type="project" value="TreeGrafter"/>
</dbReference>
<dbReference type="CDD" id="cd04732">
    <property type="entry name" value="HisA"/>
    <property type="match status" value="1"/>
</dbReference>
<dbReference type="FunFam" id="3.20.20.70:FF:000009">
    <property type="entry name" value="1-(5-phosphoribosyl)-5-[(5-phosphoribosylamino)methylideneamino] imidazole-4-carboxamide isomerase"/>
    <property type="match status" value="1"/>
</dbReference>
<dbReference type="Gene3D" id="3.20.20.70">
    <property type="entry name" value="Aldolase class I"/>
    <property type="match status" value="1"/>
</dbReference>
<dbReference type="HAMAP" id="MF_01014">
    <property type="entry name" value="HisA"/>
    <property type="match status" value="1"/>
</dbReference>
<dbReference type="InterPro" id="IPR013785">
    <property type="entry name" value="Aldolase_TIM"/>
</dbReference>
<dbReference type="InterPro" id="IPR006062">
    <property type="entry name" value="His_biosynth"/>
</dbReference>
<dbReference type="InterPro" id="IPR006063">
    <property type="entry name" value="HisA_bact_arch"/>
</dbReference>
<dbReference type="InterPro" id="IPR044524">
    <property type="entry name" value="Isoase_HisA-like"/>
</dbReference>
<dbReference type="InterPro" id="IPR023016">
    <property type="entry name" value="Isoase_HisA-like_bact"/>
</dbReference>
<dbReference type="InterPro" id="IPR011060">
    <property type="entry name" value="RibuloseP-bd_barrel"/>
</dbReference>
<dbReference type="NCBIfam" id="TIGR00007">
    <property type="entry name" value="1-(5-phosphoribosyl)-5-[(5-phosphoribosylamino)methylideneamino]imidazole-4-carboxamide isomerase"/>
    <property type="match status" value="1"/>
</dbReference>
<dbReference type="NCBIfam" id="NF010112">
    <property type="entry name" value="PRK13585.1"/>
    <property type="match status" value="1"/>
</dbReference>
<dbReference type="PANTHER" id="PTHR43090">
    <property type="entry name" value="1-(5-PHOSPHORIBOSYL)-5-[(5-PHOSPHORIBOSYLAMINO)METHYLIDENEAMINO] IMIDAZOLE-4-CARBOXAMIDE ISOMERASE"/>
    <property type="match status" value="1"/>
</dbReference>
<dbReference type="PANTHER" id="PTHR43090:SF2">
    <property type="entry name" value="1-(5-PHOSPHORIBOSYL)-5-[(5-PHOSPHORIBOSYLAMINO)METHYLIDENEAMINO] IMIDAZOLE-4-CARBOXAMIDE ISOMERASE"/>
    <property type="match status" value="1"/>
</dbReference>
<dbReference type="Pfam" id="PF00977">
    <property type="entry name" value="His_biosynth"/>
    <property type="match status" value="1"/>
</dbReference>
<dbReference type="SUPFAM" id="SSF51366">
    <property type="entry name" value="Ribulose-phoshate binding barrel"/>
    <property type="match status" value="1"/>
</dbReference>
<protein>
    <recommendedName>
        <fullName evidence="1">1-(5-phosphoribosyl)-5-[(5-phosphoribosylamino)methylideneamino] imidazole-4-carboxamide isomerase</fullName>
        <ecNumber evidence="1">5.3.1.16</ecNumber>
    </recommendedName>
    <alternativeName>
        <fullName evidence="1">Phosphoribosylformimino-5-aminoimidazole carboxamide ribotide isomerase</fullName>
    </alternativeName>
</protein>
<organism>
    <name type="scientific">Ralstonia pickettii (strain 12J)</name>
    <dbReference type="NCBI Taxonomy" id="402626"/>
    <lineage>
        <taxon>Bacteria</taxon>
        <taxon>Pseudomonadati</taxon>
        <taxon>Pseudomonadota</taxon>
        <taxon>Betaproteobacteria</taxon>
        <taxon>Burkholderiales</taxon>
        <taxon>Burkholderiaceae</taxon>
        <taxon>Ralstonia</taxon>
    </lineage>
</organism>
<comment type="catalytic activity">
    <reaction evidence="1">
        <text>1-(5-phospho-beta-D-ribosyl)-5-[(5-phospho-beta-D-ribosylamino)methylideneamino]imidazole-4-carboxamide = 5-[(5-phospho-1-deoxy-D-ribulos-1-ylimino)methylamino]-1-(5-phospho-beta-D-ribosyl)imidazole-4-carboxamide</text>
        <dbReference type="Rhea" id="RHEA:15469"/>
        <dbReference type="ChEBI" id="CHEBI:58435"/>
        <dbReference type="ChEBI" id="CHEBI:58525"/>
        <dbReference type="EC" id="5.3.1.16"/>
    </reaction>
</comment>
<comment type="pathway">
    <text evidence="1">Amino-acid biosynthesis; L-histidine biosynthesis; L-histidine from 5-phospho-alpha-D-ribose 1-diphosphate: step 4/9.</text>
</comment>
<comment type="subcellular location">
    <subcellularLocation>
        <location evidence="1">Cytoplasm</location>
    </subcellularLocation>
</comment>
<comment type="similarity">
    <text evidence="1">Belongs to the HisA/HisF family.</text>
</comment>
<keyword id="KW-0028">Amino-acid biosynthesis</keyword>
<keyword id="KW-0963">Cytoplasm</keyword>
<keyword id="KW-0368">Histidine biosynthesis</keyword>
<keyword id="KW-0413">Isomerase</keyword>
<proteinExistence type="inferred from homology"/>
<reference key="1">
    <citation type="submission" date="2008-05" db="EMBL/GenBank/DDBJ databases">
        <title>Complete sequence of chromosome 1 of Ralstonia pickettii 12J.</title>
        <authorList>
            <person name="Lucas S."/>
            <person name="Copeland A."/>
            <person name="Lapidus A."/>
            <person name="Glavina del Rio T."/>
            <person name="Dalin E."/>
            <person name="Tice H."/>
            <person name="Bruce D."/>
            <person name="Goodwin L."/>
            <person name="Pitluck S."/>
            <person name="Meincke L."/>
            <person name="Brettin T."/>
            <person name="Detter J.C."/>
            <person name="Han C."/>
            <person name="Kuske C.R."/>
            <person name="Schmutz J."/>
            <person name="Larimer F."/>
            <person name="Land M."/>
            <person name="Hauser L."/>
            <person name="Kyrpides N."/>
            <person name="Mikhailova N."/>
            <person name="Marsh T."/>
            <person name="Richardson P."/>
        </authorList>
    </citation>
    <scope>NUCLEOTIDE SEQUENCE [LARGE SCALE GENOMIC DNA]</scope>
    <source>
        <strain>12J</strain>
    </source>
</reference>
<gene>
    <name evidence="1" type="primary">hisA</name>
    <name type="ordered locus">Rpic_3224</name>
</gene>
<name>HIS4_RALPJ</name>
<evidence type="ECO:0000255" key="1">
    <source>
        <dbReference type="HAMAP-Rule" id="MF_01014"/>
    </source>
</evidence>
<sequence length="247" mass="26188">MLLIPAIDLKDGQCVRLKQGDMDQATVFSEDPAAMARHWVEQGARRLHLVDLNGAFAGKPRNEAAVKAILAEVGDEIPVQLGGGIRDLGTIERWLDDGLSYVIIGTAAVKDPGFLRDACTAFGGHIIVGLDAKDGKVATDGWSKLSGHEVVDLAKKYEDYGVEGIIYTDIGRDGMLQGINIDATVKLAQSVKIPVIASGGLSNLKDIDHLCAVEEHGVEGVICGRAIYSGDLNFKEAQALADKLGAA</sequence>
<feature type="chain" id="PRO_1000135143" description="1-(5-phosphoribosyl)-5-[(5-phosphoribosylamino)methylideneamino] imidazole-4-carboxamide isomerase">
    <location>
        <begin position="1"/>
        <end position="247"/>
    </location>
</feature>
<feature type="active site" description="Proton acceptor" evidence="1">
    <location>
        <position position="8"/>
    </location>
</feature>
<feature type="active site" description="Proton donor" evidence="1">
    <location>
        <position position="131"/>
    </location>
</feature>